<name>NDHM_SYNY3</name>
<reference key="1">
    <citation type="journal article" date="1996" name="DNA Res.">
        <title>Sequence analysis of the genome of the unicellular cyanobacterium Synechocystis sp. strain PCC6803. II. Sequence determination of the entire genome and assignment of potential protein-coding regions.</title>
        <authorList>
            <person name="Kaneko T."/>
            <person name="Sato S."/>
            <person name="Kotani H."/>
            <person name="Tanaka A."/>
            <person name="Asamizu E."/>
            <person name="Nakamura Y."/>
            <person name="Miyajima N."/>
            <person name="Hirosawa M."/>
            <person name="Sugiura M."/>
            <person name="Sasamoto S."/>
            <person name="Kimura T."/>
            <person name="Hosouchi T."/>
            <person name="Matsuno A."/>
            <person name="Muraki A."/>
            <person name="Nakazaki N."/>
            <person name="Naruo K."/>
            <person name="Okumura S."/>
            <person name="Shimpo S."/>
            <person name="Takeuchi C."/>
            <person name="Wada T."/>
            <person name="Watanabe A."/>
            <person name="Yamada M."/>
            <person name="Yasuda M."/>
            <person name="Tabata S."/>
        </authorList>
    </citation>
    <scope>NUCLEOTIDE SEQUENCE [LARGE SCALE GENOMIC DNA]</scope>
    <source>
        <strain>ATCC 27184 / PCC 6803 / Kazusa</strain>
    </source>
</reference>
<reference key="2">
    <citation type="journal article" date="1993" name="FEBS Lett.">
        <title>Immunopurification of a subcomplex of the NAD(P)H-plastoquinone-oxidoreductase from the cyanobacterium Synechocystis sp. PCC6803.</title>
        <authorList>
            <person name="Berger S."/>
            <person name="Ellersiek U."/>
            <person name="Kinzelt D."/>
            <person name="Steinmueller K."/>
        </authorList>
    </citation>
    <scope>PROTEIN SEQUENCE OF 1-19</scope>
    <scope>CHARACTERIZATION AS A MEMBER OF THE NAD(P)H-QUINONE OXIDOREDUCTASE COMPLEX</scope>
</reference>
<reference key="3">
    <citation type="journal article" date="2004" name="J. Biol. Chem.">
        <title>Subunit composition of NDH-1 complexes of Synechocystis sp. PCC 6803: identification of two new ndh gene products with nuclear-encoded homologues in the chloroplast Ndh complex.</title>
        <authorList>
            <person name="Prommeenate P."/>
            <person name="Lennon A.M."/>
            <person name="Markert C."/>
            <person name="Hippler M."/>
            <person name="Nixon P.J."/>
        </authorList>
    </citation>
    <scope>PROTEIN SEQUENCE OF 1-8</scope>
    <scope>CHARACTERIZATION AS A MEMBER OF THE NAD(P)H-QUINONE OXIDOREDUCTASE COMPLEX</scope>
    <scope>SUBCOMPLEXES OF NDH-1</scope>
</reference>
<reference key="4">
    <citation type="journal article" date="2005" name="J. Biol. Chem.">
        <title>Identification of NdhL and Ssl1690 (NdhO) in NDH-1L and NDH-1M complexes of Synechocystis sp. PCC 6803.</title>
        <authorList>
            <person name="Battchikova N."/>
            <person name="Zhang P."/>
            <person name="Rudd S."/>
            <person name="Ogawa T."/>
            <person name="Aro E.-M."/>
        </authorList>
    </citation>
    <scope>PROTEIN SEQUENCE OF 52-71; 73-82 AND 90-107</scope>
    <scope>SUBCOMPLEXES OF NDH-1</scope>
</reference>
<reference key="5">
    <citation type="journal article" date="2005" name="Proteomics">
        <title>Proteomic studies of the thylakoid membrane of Synechocystis sp. PCC 6803.</title>
        <authorList>
            <person name="Srivastava R."/>
            <person name="Pisareva T."/>
            <person name="Norling B."/>
        </authorList>
    </citation>
    <scope>SUBCELLULAR LOCATION</scope>
</reference>
<evidence type="ECO:0000250" key="1"/>
<evidence type="ECO:0000305" key="2"/>
<evidence type="ECO:0000305" key="3">
    <source>
    </source>
</evidence>
<comment type="function">
    <text evidence="1">NDH-1 shuttles electrons from an unknown electron donor, via FMN and iron-sulfur (Fe-S) centers, to quinones in the respiratory and/or the photosynthetic chain. The immediate electron acceptor for the enzyme in this species is believed to be plastoquinone. Couples the redox reaction to proton translocation, and thus conserves the redox energy in a proton gradient. Cyanobacterial NDH-1 also plays a role in inorganic carbon-concentration (By similarity).</text>
</comment>
<comment type="catalytic activity">
    <reaction>
        <text>a plastoquinone + NADH + (n+1) H(+)(in) = a plastoquinol + NAD(+) + n H(+)(out)</text>
        <dbReference type="Rhea" id="RHEA:42608"/>
        <dbReference type="Rhea" id="RHEA-COMP:9561"/>
        <dbReference type="Rhea" id="RHEA-COMP:9562"/>
        <dbReference type="ChEBI" id="CHEBI:15378"/>
        <dbReference type="ChEBI" id="CHEBI:17757"/>
        <dbReference type="ChEBI" id="CHEBI:57540"/>
        <dbReference type="ChEBI" id="CHEBI:57945"/>
        <dbReference type="ChEBI" id="CHEBI:62192"/>
    </reaction>
</comment>
<comment type="catalytic activity">
    <reaction>
        <text>a plastoquinone + NADPH + (n+1) H(+)(in) = a plastoquinol + NADP(+) + n H(+)(out)</text>
        <dbReference type="Rhea" id="RHEA:42612"/>
        <dbReference type="Rhea" id="RHEA-COMP:9561"/>
        <dbReference type="Rhea" id="RHEA-COMP:9562"/>
        <dbReference type="ChEBI" id="CHEBI:15378"/>
        <dbReference type="ChEBI" id="CHEBI:17757"/>
        <dbReference type="ChEBI" id="CHEBI:57783"/>
        <dbReference type="ChEBI" id="CHEBI:58349"/>
        <dbReference type="ChEBI" id="CHEBI:62192"/>
    </reaction>
</comment>
<comment type="subunit">
    <text>NDH-1 can be composed of about 15 different subunits; different subcomplexes with different compositions have been identified which probably have different functions.</text>
</comment>
<comment type="subcellular location">
    <subcellularLocation>
        <location evidence="3">Cellular thylakoid membrane</location>
        <topology evidence="3">Peripheral membrane protein</topology>
        <orientation evidence="3">Cytoplasmic side</orientation>
    </subcellularLocation>
</comment>
<comment type="similarity">
    <text evidence="2">Belongs to the complex I NdhM subunit family.</text>
</comment>
<feature type="chain" id="PRO_0000352209" description="NAD(P)H-quinone oxidoreductase subunit M">
    <location>
        <begin position="1"/>
        <end position="121"/>
    </location>
</feature>
<keyword id="KW-0903">Direct protein sequencing</keyword>
<keyword id="KW-0472">Membrane</keyword>
<keyword id="KW-0520">NAD</keyword>
<keyword id="KW-0521">NADP</keyword>
<keyword id="KW-0618">Plastoquinone</keyword>
<keyword id="KW-0874">Quinone</keyword>
<keyword id="KW-1185">Reference proteome</keyword>
<keyword id="KW-0793">Thylakoid</keyword>
<keyword id="KW-1278">Translocase</keyword>
<keyword id="KW-0813">Transport</keyword>
<organism>
    <name type="scientific">Synechocystis sp. (strain ATCC 27184 / PCC 6803 / Kazusa)</name>
    <dbReference type="NCBI Taxonomy" id="1111708"/>
    <lineage>
        <taxon>Bacteria</taxon>
        <taxon>Bacillati</taxon>
        <taxon>Cyanobacteriota</taxon>
        <taxon>Cyanophyceae</taxon>
        <taxon>Synechococcales</taxon>
        <taxon>Merismopediaceae</taxon>
        <taxon>Synechocystis</taxon>
    </lineage>
</organism>
<gene>
    <name type="primary">ndhM</name>
    <name type="ordered locus">slr1623</name>
</gene>
<dbReference type="EC" id="7.1.1.-"/>
<dbReference type="EMBL" id="BA000022">
    <property type="protein sequence ID" value="BAA18432.1"/>
    <property type="molecule type" value="Genomic_DNA"/>
</dbReference>
<dbReference type="PIR" id="S76173">
    <property type="entry name" value="S76173"/>
</dbReference>
<dbReference type="SMR" id="P74338"/>
<dbReference type="IntAct" id="P74338">
    <property type="interactions" value="3"/>
</dbReference>
<dbReference type="STRING" id="1148.gene:10499308"/>
<dbReference type="PaxDb" id="1148-1653519"/>
<dbReference type="EnsemblBacteria" id="BAA18432">
    <property type="protein sequence ID" value="BAA18432"/>
    <property type="gene ID" value="BAA18432"/>
</dbReference>
<dbReference type="KEGG" id="syn:slr1623"/>
<dbReference type="eggNOG" id="ENOG5031AQM">
    <property type="taxonomic scope" value="Bacteria"/>
</dbReference>
<dbReference type="InParanoid" id="P74338"/>
<dbReference type="PhylomeDB" id="P74338"/>
<dbReference type="Proteomes" id="UP000001425">
    <property type="component" value="Chromosome"/>
</dbReference>
<dbReference type="GO" id="GO:0031676">
    <property type="term" value="C:plasma membrane-derived thylakoid membrane"/>
    <property type="evidence" value="ECO:0007669"/>
    <property type="project" value="UniProtKB-SubCell"/>
</dbReference>
<dbReference type="GO" id="GO:0016655">
    <property type="term" value="F:oxidoreductase activity, acting on NAD(P)H, quinone or similar compound as acceptor"/>
    <property type="evidence" value="ECO:0007669"/>
    <property type="project" value="UniProtKB-UniRule"/>
</dbReference>
<dbReference type="GO" id="GO:0048038">
    <property type="term" value="F:quinone binding"/>
    <property type="evidence" value="ECO:0007669"/>
    <property type="project" value="UniProtKB-KW"/>
</dbReference>
<dbReference type="HAMAP" id="MF_01352">
    <property type="entry name" value="NDH1_NDH1M"/>
    <property type="match status" value="1"/>
</dbReference>
<dbReference type="InterPro" id="IPR018922">
    <property type="entry name" value="NdhM"/>
</dbReference>
<dbReference type="PANTHER" id="PTHR36900">
    <property type="entry name" value="NAD(P)H-QUINONE OXIDOREDUCTASE SUBUNIT M, CHLOROPLASTIC"/>
    <property type="match status" value="1"/>
</dbReference>
<dbReference type="PANTHER" id="PTHR36900:SF1">
    <property type="entry name" value="NAD(P)H-QUINONE OXIDOREDUCTASE SUBUNIT M, CHLOROPLASTIC"/>
    <property type="match status" value="1"/>
</dbReference>
<dbReference type="Pfam" id="PF10664">
    <property type="entry name" value="NdhM"/>
    <property type="match status" value="1"/>
</dbReference>
<accession>P74338</accession>
<sequence>MLVKSTTRHVRIFSAEVQGNELIPSNNVLTMDVDPDNEFVWNEDALQQVYRRFDELVESYSGEDLTDYNLRRIGSDLEHFIRDLLQAGKVSYNLDCRVLNYSMGLPKVENQETAGKYWLDN</sequence>
<protein>
    <recommendedName>
        <fullName>NAD(P)H-quinone oxidoreductase subunit M</fullName>
        <ecNumber>7.1.1.-</ecNumber>
    </recommendedName>
    <alternativeName>
        <fullName>NAD(P)H dehydrogenase I subunit M</fullName>
        <shortName>NDH-1 subunit M</shortName>
        <shortName>NDH-M</shortName>
    </alternativeName>
</protein>
<proteinExistence type="evidence at protein level"/>